<feature type="signal peptide" evidence="2">
    <location>
        <begin position="1"/>
        <end position="19"/>
    </location>
</feature>
<feature type="chain" id="PRO_0000417946" description="EGF-like domain containing protein 1" evidence="2">
    <location>
        <begin position="20"/>
        <end position="348"/>
    </location>
</feature>
<feature type="domain" description="EGF-like" evidence="3">
    <location>
        <begin position="60"/>
        <end position="92"/>
    </location>
</feature>
<feature type="domain" description="ZP" evidence="4">
    <location>
        <begin position="99"/>
        <end position="342"/>
    </location>
</feature>
<feature type="disulfide bond" evidence="3">
    <location>
        <begin position="64"/>
        <end position="74"/>
    </location>
</feature>
<feature type="disulfide bond" evidence="3">
    <location>
        <begin position="68"/>
        <end position="80"/>
    </location>
</feature>
<feature type="disulfide bond" evidence="3">
    <location>
        <begin position="82"/>
        <end position="91"/>
    </location>
</feature>
<comment type="subcellular location">
    <subcellularLocation>
        <location evidence="5">Secreted</location>
    </subcellularLocation>
</comment>
<comment type="tissue specificity">
    <text evidence="5">Prismatic layer of shell (at protein level). Expressed primarily in the mantle with highest level in the mantle edge and lower level in the mantle pallium.</text>
</comment>
<proteinExistence type="evidence at protein level"/>
<organism>
    <name type="scientific">Margaritifera margaritifera</name>
    <name type="common">Freshwater pearl mussel</name>
    <dbReference type="NCBI Taxonomy" id="102329"/>
    <lineage>
        <taxon>Eukaryota</taxon>
        <taxon>Metazoa</taxon>
        <taxon>Spiralia</taxon>
        <taxon>Lophotrochozoa</taxon>
        <taxon>Mollusca</taxon>
        <taxon>Bivalvia</taxon>
        <taxon>Autobranchia</taxon>
        <taxon>Pteriomorphia</taxon>
        <taxon>Pterioida</taxon>
        <taxon>Pterioidea</taxon>
        <taxon>Pteriidae</taxon>
        <taxon>Pinctada</taxon>
    </lineage>
</organism>
<reference evidence="6" key="1">
    <citation type="journal article" date="2010" name="BMC Genomics">
        <title>Transcriptome and proteome analysis of Pinctada margaritifera calcifying mantle and shell: focus on biomineralization.</title>
        <authorList>
            <person name="Joubert C."/>
            <person name="Piquemal D."/>
            <person name="Marie B."/>
            <person name="Manchon L."/>
            <person name="Pierrat F."/>
            <person name="Zanella-Cleon I."/>
            <person name="Cochennec-Laureau N."/>
            <person name="Gueguen Y."/>
            <person name="Montagnani C."/>
        </authorList>
    </citation>
    <scope>NUCLEOTIDE SEQUENCE [MRNA]</scope>
    <scope>IDENTIFICATION</scope>
    <source>
        <tissue>Mantle</tissue>
    </source>
</reference>
<reference key="2">
    <citation type="journal article" date="2012" name="Proc. Natl. Acad. Sci. U.S.A.">
        <title>Different secretory repertoires control the biomineralization processes of prism and nacre deposition of the pearl oyster shell.</title>
        <authorList>
            <person name="Marie B."/>
            <person name="Joubert C."/>
            <person name="Tayale A."/>
            <person name="Zanella-Cleon I."/>
            <person name="Belliard C."/>
            <person name="Piquemal D."/>
            <person name="Cochennec-Laureau N."/>
            <person name="Marin F."/>
            <person name="Gueguen Y."/>
            <person name="Montagnani C."/>
        </authorList>
    </citation>
    <scope>PROTEIN SEQUENCE OF 46-55; 100-125; 146-157; 194-215; 220-248 AND 281-305</scope>
    <scope>SUBCELLULAR LOCATION</scope>
    <scope>TISSUE SPECIFICITY</scope>
    <source>
        <tissue>Shell</tissue>
    </source>
</reference>
<evidence type="ECO:0000250" key="1">
    <source>
        <dbReference type="UniProtKB" id="P86953"/>
    </source>
</evidence>
<evidence type="ECO:0000255" key="2"/>
<evidence type="ECO:0000255" key="3">
    <source>
        <dbReference type="PROSITE-ProRule" id="PRU00076"/>
    </source>
</evidence>
<evidence type="ECO:0000255" key="4">
    <source>
        <dbReference type="PROSITE-ProRule" id="PRU00375"/>
    </source>
</evidence>
<evidence type="ECO:0000269" key="5">
    <source>
    </source>
</evidence>
<evidence type="ECO:0000305" key="6"/>
<name>ELDP1_PINMG</name>
<keyword id="KW-0903">Direct protein sequencing</keyword>
<keyword id="KW-1015">Disulfide bond</keyword>
<keyword id="KW-0245">EGF-like domain</keyword>
<keyword id="KW-0964">Secreted</keyword>
<keyword id="KW-0732">Signal</keyword>
<accession>H2A0L2</accession>
<sequence length="348" mass="38479">MFYLSTFMTIVISLSLVSCSYDCNNPGFTCHGECHYYGSCICNERLTGYDCSVLKSSLSTGSDCKVTCQNNGRCYDGNKCLCSSDYTGHLCEKQTTGARCTLDGVVFEAYRPIGFDGETYLSQSRSCKLLQSESDVPGMIKFERKIFHGDTSMCGLKKHMDMPNAGDITYEADIYSTFVYNSWGTRDFVDNVKCQYKPTRVGLSMDAPDSLFPIKMSARDGASSNVQATTQSAPISLLFSPQNIPDVKGAMVDYMEVYSINSTSKEYKSVVAVKNGCAQKTEYNVAFDNLDELDPVTSTWIGLVKMQAFIIFENEPLLFNYRLRFCPDRCSKPTCAAPAVSQAPSTAV</sequence>
<protein>
    <recommendedName>
        <fullName evidence="1">EGF-like domain containing protein 1</fullName>
    </recommendedName>
</protein>
<dbReference type="EMBL" id="HE610379">
    <property type="protein sequence ID" value="CCE46153.1"/>
    <property type="molecule type" value="mRNA"/>
</dbReference>
<dbReference type="GO" id="GO:0005576">
    <property type="term" value="C:extracellular region"/>
    <property type="evidence" value="ECO:0007669"/>
    <property type="project" value="UniProtKB-SubCell"/>
</dbReference>
<dbReference type="Gene3D" id="2.10.25.10">
    <property type="entry name" value="Laminin"/>
    <property type="match status" value="1"/>
</dbReference>
<dbReference type="InterPro" id="IPR000742">
    <property type="entry name" value="EGF-like_dom"/>
</dbReference>
<dbReference type="InterPro" id="IPR001507">
    <property type="entry name" value="ZP_dom"/>
</dbReference>
<dbReference type="PROSITE" id="PS00022">
    <property type="entry name" value="EGF_1"/>
    <property type="match status" value="2"/>
</dbReference>
<dbReference type="PROSITE" id="PS50026">
    <property type="entry name" value="EGF_3"/>
    <property type="match status" value="1"/>
</dbReference>
<dbReference type="PROSITE" id="PS51034">
    <property type="entry name" value="ZP_2"/>
    <property type="match status" value="1"/>
</dbReference>